<protein>
    <recommendedName>
        <fullName evidence="1">Pantothenate synthetase</fullName>
        <shortName evidence="1">PS</shortName>
        <ecNumber evidence="1">6.3.2.1</ecNumber>
    </recommendedName>
    <alternativeName>
        <fullName evidence="1">Pantoate--beta-alanine ligase</fullName>
    </alternativeName>
    <alternativeName>
        <fullName evidence="1">Pantoate-activating enzyme</fullName>
    </alternativeName>
</protein>
<reference key="1">
    <citation type="submission" date="2008-01" db="EMBL/GenBank/DDBJ databases">
        <title>Complete sequence of Thermoanaerobacter pseudethanolicus 39E.</title>
        <authorList>
            <person name="Copeland A."/>
            <person name="Lucas S."/>
            <person name="Lapidus A."/>
            <person name="Barry K."/>
            <person name="Glavina del Rio T."/>
            <person name="Dalin E."/>
            <person name="Tice H."/>
            <person name="Pitluck S."/>
            <person name="Bruce D."/>
            <person name="Goodwin L."/>
            <person name="Saunders E."/>
            <person name="Brettin T."/>
            <person name="Detter J.C."/>
            <person name="Han C."/>
            <person name="Schmutz J."/>
            <person name="Larimer F."/>
            <person name="Land M."/>
            <person name="Hauser L."/>
            <person name="Kyrpides N."/>
            <person name="Lykidis A."/>
            <person name="Hemme C."/>
            <person name="Fields M.W."/>
            <person name="He Z."/>
            <person name="Zhou J."/>
            <person name="Richardson P."/>
        </authorList>
    </citation>
    <scope>NUCLEOTIDE SEQUENCE [LARGE SCALE GENOMIC DNA]</scope>
    <source>
        <strain>ATCC 33223 / DSM 2355 / 39E</strain>
    </source>
</reference>
<organism>
    <name type="scientific">Thermoanaerobacter pseudethanolicus (strain ATCC 33223 / 39E)</name>
    <name type="common">Clostridium thermohydrosulfuricum</name>
    <dbReference type="NCBI Taxonomy" id="340099"/>
    <lineage>
        <taxon>Bacteria</taxon>
        <taxon>Bacillati</taxon>
        <taxon>Bacillota</taxon>
        <taxon>Clostridia</taxon>
        <taxon>Thermoanaerobacterales</taxon>
        <taxon>Thermoanaerobacteraceae</taxon>
        <taxon>Thermoanaerobacter</taxon>
    </lineage>
</organism>
<gene>
    <name evidence="1" type="primary">panC</name>
    <name type="ordered locus">Teth39_1809</name>
</gene>
<sequence>MIVTDKISNVRNIIKEQKLSGKKIGLVPTMGYLHEGHLSLVRIAKKHSDFVAVSIFVNPIQFGPNEDFDRYPRDLERDLKLLEKEGCDLVFAPSVEEMYPSELLTTVNVDKITEKLCGAFRPGHFKGVTTVVAKLFNIFTPDIAVFGQKDAQQVAVIKKMVEDLNFPVEIIKAPIVRESDGLAMSSRNVYLNPEERKAALILSKSLKEAEKLLLNGERNANTIIKKVNEVLNSEPLCKVQYVSCVHPDTLEDLTYIKDKALIAIACFIGTTRLIDNLLWGENI</sequence>
<accession>B0KC91</accession>
<evidence type="ECO:0000255" key="1">
    <source>
        <dbReference type="HAMAP-Rule" id="MF_00158"/>
    </source>
</evidence>
<dbReference type="EC" id="6.3.2.1" evidence="1"/>
<dbReference type="EMBL" id="CP000924">
    <property type="protein sequence ID" value="ABY95445.1"/>
    <property type="molecule type" value="Genomic_DNA"/>
</dbReference>
<dbReference type="RefSeq" id="WP_012269599.1">
    <property type="nucleotide sequence ID" value="NC_010321.1"/>
</dbReference>
<dbReference type="SMR" id="B0KC91"/>
<dbReference type="STRING" id="340099.Teth39_1809"/>
<dbReference type="KEGG" id="tpd:Teth39_1809"/>
<dbReference type="eggNOG" id="COG0414">
    <property type="taxonomic scope" value="Bacteria"/>
</dbReference>
<dbReference type="HOGENOM" id="CLU_047148_0_0_9"/>
<dbReference type="UniPathway" id="UPA00028">
    <property type="reaction ID" value="UER00005"/>
</dbReference>
<dbReference type="Proteomes" id="UP000002156">
    <property type="component" value="Chromosome"/>
</dbReference>
<dbReference type="GO" id="GO:0005829">
    <property type="term" value="C:cytosol"/>
    <property type="evidence" value="ECO:0007669"/>
    <property type="project" value="TreeGrafter"/>
</dbReference>
<dbReference type="GO" id="GO:0005524">
    <property type="term" value="F:ATP binding"/>
    <property type="evidence" value="ECO:0007669"/>
    <property type="project" value="UniProtKB-KW"/>
</dbReference>
<dbReference type="GO" id="GO:0004592">
    <property type="term" value="F:pantoate-beta-alanine ligase activity"/>
    <property type="evidence" value="ECO:0007669"/>
    <property type="project" value="UniProtKB-UniRule"/>
</dbReference>
<dbReference type="GO" id="GO:0015940">
    <property type="term" value="P:pantothenate biosynthetic process"/>
    <property type="evidence" value="ECO:0007669"/>
    <property type="project" value="UniProtKB-UniRule"/>
</dbReference>
<dbReference type="CDD" id="cd00560">
    <property type="entry name" value="PanC"/>
    <property type="match status" value="1"/>
</dbReference>
<dbReference type="FunFam" id="3.30.1300.10:FF:000001">
    <property type="entry name" value="Pantothenate synthetase"/>
    <property type="match status" value="1"/>
</dbReference>
<dbReference type="FunFam" id="3.40.50.620:FF:000013">
    <property type="entry name" value="Pantothenate synthetase"/>
    <property type="match status" value="1"/>
</dbReference>
<dbReference type="Gene3D" id="3.40.50.620">
    <property type="entry name" value="HUPs"/>
    <property type="match status" value="1"/>
</dbReference>
<dbReference type="Gene3D" id="3.30.1300.10">
    <property type="entry name" value="Pantoate-beta-alanine ligase, C-terminal domain"/>
    <property type="match status" value="1"/>
</dbReference>
<dbReference type="HAMAP" id="MF_00158">
    <property type="entry name" value="PanC"/>
    <property type="match status" value="1"/>
</dbReference>
<dbReference type="InterPro" id="IPR004821">
    <property type="entry name" value="Cyt_trans-like"/>
</dbReference>
<dbReference type="InterPro" id="IPR003721">
    <property type="entry name" value="Pantoate_ligase"/>
</dbReference>
<dbReference type="InterPro" id="IPR042176">
    <property type="entry name" value="Pantoate_ligase_C"/>
</dbReference>
<dbReference type="InterPro" id="IPR014729">
    <property type="entry name" value="Rossmann-like_a/b/a_fold"/>
</dbReference>
<dbReference type="NCBIfam" id="TIGR00125">
    <property type="entry name" value="cyt_tran_rel"/>
    <property type="match status" value="1"/>
</dbReference>
<dbReference type="NCBIfam" id="TIGR00018">
    <property type="entry name" value="panC"/>
    <property type="match status" value="1"/>
</dbReference>
<dbReference type="PANTHER" id="PTHR21299">
    <property type="entry name" value="CYTIDYLATE KINASE/PANTOATE-BETA-ALANINE LIGASE"/>
    <property type="match status" value="1"/>
</dbReference>
<dbReference type="PANTHER" id="PTHR21299:SF1">
    <property type="entry name" value="PANTOATE--BETA-ALANINE LIGASE"/>
    <property type="match status" value="1"/>
</dbReference>
<dbReference type="Pfam" id="PF02569">
    <property type="entry name" value="Pantoate_ligase"/>
    <property type="match status" value="1"/>
</dbReference>
<dbReference type="SUPFAM" id="SSF52374">
    <property type="entry name" value="Nucleotidylyl transferase"/>
    <property type="match status" value="1"/>
</dbReference>
<feature type="chain" id="PRO_1000097120" description="Pantothenate synthetase">
    <location>
        <begin position="1"/>
        <end position="283"/>
    </location>
</feature>
<feature type="active site" description="Proton donor" evidence="1">
    <location>
        <position position="37"/>
    </location>
</feature>
<feature type="binding site" evidence="1">
    <location>
        <begin position="30"/>
        <end position="37"/>
    </location>
    <ligand>
        <name>ATP</name>
        <dbReference type="ChEBI" id="CHEBI:30616"/>
    </ligand>
</feature>
<feature type="binding site" evidence="1">
    <location>
        <position position="61"/>
    </location>
    <ligand>
        <name>(R)-pantoate</name>
        <dbReference type="ChEBI" id="CHEBI:15980"/>
    </ligand>
</feature>
<feature type="binding site" evidence="1">
    <location>
        <position position="61"/>
    </location>
    <ligand>
        <name>beta-alanine</name>
        <dbReference type="ChEBI" id="CHEBI:57966"/>
    </ligand>
</feature>
<feature type="binding site" evidence="1">
    <location>
        <begin position="147"/>
        <end position="150"/>
    </location>
    <ligand>
        <name>ATP</name>
        <dbReference type="ChEBI" id="CHEBI:30616"/>
    </ligand>
</feature>
<feature type="binding site" evidence="1">
    <location>
        <position position="153"/>
    </location>
    <ligand>
        <name>(R)-pantoate</name>
        <dbReference type="ChEBI" id="CHEBI:15980"/>
    </ligand>
</feature>
<feature type="binding site" evidence="1">
    <location>
        <position position="176"/>
    </location>
    <ligand>
        <name>ATP</name>
        <dbReference type="ChEBI" id="CHEBI:30616"/>
    </ligand>
</feature>
<feature type="binding site" evidence="1">
    <location>
        <begin position="184"/>
        <end position="187"/>
    </location>
    <ligand>
        <name>ATP</name>
        <dbReference type="ChEBI" id="CHEBI:30616"/>
    </ligand>
</feature>
<proteinExistence type="inferred from homology"/>
<keyword id="KW-0067">ATP-binding</keyword>
<keyword id="KW-0963">Cytoplasm</keyword>
<keyword id="KW-0436">Ligase</keyword>
<keyword id="KW-0547">Nucleotide-binding</keyword>
<keyword id="KW-0566">Pantothenate biosynthesis</keyword>
<keyword id="KW-1185">Reference proteome</keyword>
<comment type="function">
    <text evidence="1">Catalyzes the condensation of pantoate with beta-alanine in an ATP-dependent reaction via a pantoyl-adenylate intermediate.</text>
</comment>
<comment type="catalytic activity">
    <reaction evidence="1">
        <text>(R)-pantoate + beta-alanine + ATP = (R)-pantothenate + AMP + diphosphate + H(+)</text>
        <dbReference type="Rhea" id="RHEA:10912"/>
        <dbReference type="ChEBI" id="CHEBI:15378"/>
        <dbReference type="ChEBI" id="CHEBI:15980"/>
        <dbReference type="ChEBI" id="CHEBI:29032"/>
        <dbReference type="ChEBI" id="CHEBI:30616"/>
        <dbReference type="ChEBI" id="CHEBI:33019"/>
        <dbReference type="ChEBI" id="CHEBI:57966"/>
        <dbReference type="ChEBI" id="CHEBI:456215"/>
        <dbReference type="EC" id="6.3.2.1"/>
    </reaction>
</comment>
<comment type="pathway">
    <text evidence="1">Cofactor biosynthesis; (R)-pantothenate biosynthesis; (R)-pantothenate from (R)-pantoate and beta-alanine: step 1/1.</text>
</comment>
<comment type="subunit">
    <text evidence="1">Homodimer.</text>
</comment>
<comment type="subcellular location">
    <subcellularLocation>
        <location evidence="1">Cytoplasm</location>
    </subcellularLocation>
</comment>
<comment type="miscellaneous">
    <text evidence="1">The reaction proceeds by a bi uni uni bi ping pong mechanism.</text>
</comment>
<comment type="similarity">
    <text evidence="1">Belongs to the pantothenate synthetase family.</text>
</comment>
<name>PANC_THEP3</name>